<organism>
    <name type="scientific">Clostridium botulinum (strain ATCC 19397 / Type A)</name>
    <dbReference type="NCBI Taxonomy" id="441770"/>
    <lineage>
        <taxon>Bacteria</taxon>
        <taxon>Bacillati</taxon>
        <taxon>Bacillota</taxon>
        <taxon>Clostridia</taxon>
        <taxon>Eubacteriales</taxon>
        <taxon>Clostridiaceae</taxon>
        <taxon>Clostridium</taxon>
    </lineage>
</organism>
<accession>A7FZ60</accession>
<sequence length="84" mass="9846">MERSNRKTRIGRVVSNKMDKTIVVAVETKVRHPLYGKIMNRTTKFKAHDENNAANINDKVLIMETRPLSKQKRWRLVEVVEKAK</sequence>
<keyword id="KW-0687">Ribonucleoprotein</keyword>
<keyword id="KW-0689">Ribosomal protein</keyword>
<keyword id="KW-0694">RNA-binding</keyword>
<keyword id="KW-0699">rRNA-binding</keyword>
<feature type="chain" id="PRO_1000054938" description="Small ribosomal subunit protein uS17">
    <location>
        <begin position="1"/>
        <end position="84"/>
    </location>
</feature>
<comment type="function">
    <text evidence="1">One of the primary rRNA binding proteins, it binds specifically to the 5'-end of 16S ribosomal RNA.</text>
</comment>
<comment type="subunit">
    <text evidence="1">Part of the 30S ribosomal subunit.</text>
</comment>
<comment type="similarity">
    <text evidence="1">Belongs to the universal ribosomal protein uS17 family.</text>
</comment>
<name>RS17_CLOB1</name>
<evidence type="ECO:0000255" key="1">
    <source>
        <dbReference type="HAMAP-Rule" id="MF_01345"/>
    </source>
</evidence>
<evidence type="ECO:0000305" key="2"/>
<gene>
    <name evidence="1" type="primary">rpsQ</name>
    <name type="ordered locus">CLB_3528</name>
</gene>
<dbReference type="EMBL" id="CP000726">
    <property type="protein sequence ID" value="ABS32515.1"/>
    <property type="molecule type" value="Genomic_DNA"/>
</dbReference>
<dbReference type="RefSeq" id="WP_003357552.1">
    <property type="nucleotide sequence ID" value="NC_009697.1"/>
</dbReference>
<dbReference type="SMR" id="A7FZ60"/>
<dbReference type="GeneID" id="5186963"/>
<dbReference type="KEGG" id="cba:CLB_3528"/>
<dbReference type="HOGENOM" id="CLU_073626_1_0_9"/>
<dbReference type="GO" id="GO:0022627">
    <property type="term" value="C:cytosolic small ribosomal subunit"/>
    <property type="evidence" value="ECO:0007669"/>
    <property type="project" value="TreeGrafter"/>
</dbReference>
<dbReference type="GO" id="GO:0019843">
    <property type="term" value="F:rRNA binding"/>
    <property type="evidence" value="ECO:0007669"/>
    <property type="project" value="UniProtKB-UniRule"/>
</dbReference>
<dbReference type="GO" id="GO:0003735">
    <property type="term" value="F:structural constituent of ribosome"/>
    <property type="evidence" value="ECO:0007669"/>
    <property type="project" value="InterPro"/>
</dbReference>
<dbReference type="GO" id="GO:0006412">
    <property type="term" value="P:translation"/>
    <property type="evidence" value="ECO:0007669"/>
    <property type="project" value="UniProtKB-UniRule"/>
</dbReference>
<dbReference type="CDD" id="cd00364">
    <property type="entry name" value="Ribosomal_uS17"/>
    <property type="match status" value="1"/>
</dbReference>
<dbReference type="FunFam" id="2.40.50.140:FF:000026">
    <property type="entry name" value="30S ribosomal protein S17"/>
    <property type="match status" value="1"/>
</dbReference>
<dbReference type="Gene3D" id="2.40.50.140">
    <property type="entry name" value="Nucleic acid-binding proteins"/>
    <property type="match status" value="1"/>
</dbReference>
<dbReference type="HAMAP" id="MF_01345_B">
    <property type="entry name" value="Ribosomal_uS17_B"/>
    <property type="match status" value="1"/>
</dbReference>
<dbReference type="InterPro" id="IPR012340">
    <property type="entry name" value="NA-bd_OB-fold"/>
</dbReference>
<dbReference type="InterPro" id="IPR000266">
    <property type="entry name" value="Ribosomal_uS17"/>
</dbReference>
<dbReference type="InterPro" id="IPR019984">
    <property type="entry name" value="Ribosomal_uS17_bact/chlr"/>
</dbReference>
<dbReference type="NCBIfam" id="NF004123">
    <property type="entry name" value="PRK05610.1"/>
    <property type="match status" value="1"/>
</dbReference>
<dbReference type="NCBIfam" id="TIGR03635">
    <property type="entry name" value="uS17_bact"/>
    <property type="match status" value="1"/>
</dbReference>
<dbReference type="PANTHER" id="PTHR10744">
    <property type="entry name" value="40S RIBOSOMAL PROTEIN S11 FAMILY MEMBER"/>
    <property type="match status" value="1"/>
</dbReference>
<dbReference type="PANTHER" id="PTHR10744:SF1">
    <property type="entry name" value="SMALL RIBOSOMAL SUBUNIT PROTEIN US17M"/>
    <property type="match status" value="1"/>
</dbReference>
<dbReference type="Pfam" id="PF00366">
    <property type="entry name" value="Ribosomal_S17"/>
    <property type="match status" value="1"/>
</dbReference>
<dbReference type="PRINTS" id="PR00973">
    <property type="entry name" value="RIBOSOMALS17"/>
</dbReference>
<dbReference type="SUPFAM" id="SSF50249">
    <property type="entry name" value="Nucleic acid-binding proteins"/>
    <property type="match status" value="1"/>
</dbReference>
<reference key="1">
    <citation type="journal article" date="2007" name="PLoS ONE">
        <title>Analysis of the neurotoxin complex genes in Clostridium botulinum A1-A4 and B1 strains: BoNT/A3, /Ba4 and /B1 clusters are located within plasmids.</title>
        <authorList>
            <person name="Smith T.J."/>
            <person name="Hill K.K."/>
            <person name="Foley B.T."/>
            <person name="Detter J.C."/>
            <person name="Munk A.C."/>
            <person name="Bruce D.C."/>
            <person name="Doggett N.A."/>
            <person name="Smith L.A."/>
            <person name="Marks J.D."/>
            <person name="Xie G."/>
            <person name="Brettin T.S."/>
        </authorList>
    </citation>
    <scope>NUCLEOTIDE SEQUENCE [LARGE SCALE GENOMIC DNA]</scope>
    <source>
        <strain>ATCC 19397 / Type A</strain>
    </source>
</reference>
<protein>
    <recommendedName>
        <fullName evidence="1">Small ribosomal subunit protein uS17</fullName>
    </recommendedName>
    <alternativeName>
        <fullName evidence="2">30S ribosomal protein S17</fullName>
    </alternativeName>
</protein>
<proteinExistence type="inferred from homology"/>